<keyword id="KW-1185">Reference proteome</keyword>
<keyword id="KW-0687">Ribonucleoprotein</keyword>
<keyword id="KW-0689">Ribosomal protein</keyword>
<dbReference type="EMBL" id="X69484">
    <property type="protein sequence ID" value="CAA49239.1"/>
    <property type="molecule type" value="Genomic_DNA"/>
</dbReference>
<dbReference type="EMBL" id="AAFI02000006">
    <property type="protein sequence ID" value="EAL71704.1"/>
    <property type="molecule type" value="Genomic_DNA"/>
</dbReference>
<dbReference type="PIR" id="JC1411">
    <property type="entry name" value="JC1411"/>
</dbReference>
<dbReference type="RefSeq" id="XP_645662.1">
    <property type="nucleotide sequence ID" value="XM_640570.1"/>
</dbReference>
<dbReference type="SMR" id="Q03409"/>
<dbReference type="FunCoup" id="Q03409">
    <property type="interactions" value="625"/>
</dbReference>
<dbReference type="STRING" id="44689.Q03409"/>
<dbReference type="PaxDb" id="44689-DDB0215350"/>
<dbReference type="EnsemblProtists" id="EAL71704">
    <property type="protein sequence ID" value="EAL71704"/>
    <property type="gene ID" value="DDB_G0271148"/>
</dbReference>
<dbReference type="GeneID" id="8617854"/>
<dbReference type="KEGG" id="ddi:DDB_G0271148"/>
<dbReference type="dictyBase" id="DDB_G0271148">
    <property type="gene designation" value="rps25"/>
</dbReference>
<dbReference type="VEuPathDB" id="AmoebaDB:DDB_G0271148"/>
<dbReference type="eggNOG" id="KOG1767">
    <property type="taxonomic scope" value="Eukaryota"/>
</dbReference>
<dbReference type="HOGENOM" id="CLU_129470_0_2_1"/>
<dbReference type="InParanoid" id="Q03409"/>
<dbReference type="OMA" id="RIVHHSG"/>
<dbReference type="PhylomeDB" id="Q03409"/>
<dbReference type="Reactome" id="R-DDI-156827">
    <property type="pathway name" value="L13a-mediated translational silencing of Ceruloplasmin expression"/>
</dbReference>
<dbReference type="Reactome" id="R-DDI-1799339">
    <property type="pathway name" value="SRP-dependent cotranslational protein targeting to membrane"/>
</dbReference>
<dbReference type="Reactome" id="R-DDI-72689">
    <property type="pathway name" value="Formation of a pool of free 40S subunits"/>
</dbReference>
<dbReference type="Reactome" id="R-DDI-72695">
    <property type="pathway name" value="Formation of the ternary complex, and subsequently, the 43S complex"/>
</dbReference>
<dbReference type="Reactome" id="R-DDI-72702">
    <property type="pathway name" value="Ribosomal scanning and start codon recognition"/>
</dbReference>
<dbReference type="Reactome" id="R-DDI-72706">
    <property type="pathway name" value="GTP hydrolysis and joining of the 60S ribosomal subunit"/>
</dbReference>
<dbReference type="Reactome" id="R-DDI-975956">
    <property type="pathway name" value="Nonsense Mediated Decay (NMD) independent of the Exon Junction Complex (EJC)"/>
</dbReference>
<dbReference type="Reactome" id="R-DDI-975957">
    <property type="pathway name" value="Nonsense Mediated Decay (NMD) enhanced by the Exon Junction Complex (EJC)"/>
</dbReference>
<dbReference type="PRO" id="PR:Q03409"/>
<dbReference type="Proteomes" id="UP000002195">
    <property type="component" value="Chromosome 2"/>
</dbReference>
<dbReference type="GO" id="GO:0022627">
    <property type="term" value="C:cytosolic small ribosomal subunit"/>
    <property type="evidence" value="ECO:0000318"/>
    <property type="project" value="GO_Central"/>
</dbReference>
<dbReference type="GO" id="GO:0031012">
    <property type="term" value="C:extracellular matrix"/>
    <property type="evidence" value="ECO:0007005"/>
    <property type="project" value="dictyBase"/>
</dbReference>
<dbReference type="GO" id="GO:0003723">
    <property type="term" value="F:RNA binding"/>
    <property type="evidence" value="ECO:0000250"/>
    <property type="project" value="dictyBase"/>
</dbReference>
<dbReference type="GO" id="GO:0003735">
    <property type="term" value="F:structural constituent of ribosome"/>
    <property type="evidence" value="ECO:0000318"/>
    <property type="project" value="GO_Central"/>
</dbReference>
<dbReference type="FunFam" id="3.30.63.20:FF:000001">
    <property type="entry name" value="40S ribosomal protein S25"/>
    <property type="match status" value="1"/>
</dbReference>
<dbReference type="Gene3D" id="3.30.63.20">
    <property type="match status" value="1"/>
</dbReference>
<dbReference type="InterPro" id="IPR004977">
    <property type="entry name" value="Ribosomal_eS25"/>
</dbReference>
<dbReference type="PANTHER" id="PTHR12850">
    <property type="entry name" value="40S RIBOSOMAL PROTEIN S25"/>
    <property type="match status" value="1"/>
</dbReference>
<dbReference type="Pfam" id="PF03297">
    <property type="entry name" value="Ribosomal_S25"/>
    <property type="match status" value="1"/>
</dbReference>
<reference key="1">
    <citation type="journal article" date="1993" name="Biochem. Biophys. Res. Commun.">
        <title>Nucleotide sequence of a Dictyostelium discoideum gene encoding a protein homologous to the yeast ribosomal protein S31.</title>
        <authorList>
            <person name="Hoja U."/>
            <person name="Hofmann J."/>
            <person name="Marschalek R."/>
            <person name="Dingermann T."/>
        </authorList>
    </citation>
    <scope>NUCLEOTIDE SEQUENCE [GENOMIC DNA]</scope>
</reference>
<reference key="2">
    <citation type="submission" date="1992-11" db="EMBL/GenBank/DDBJ databases">
        <authorList>
            <person name="Schuhmann G."/>
        </authorList>
    </citation>
    <scope>NUCLEOTIDE SEQUENCE [GENOMIC DNA]</scope>
</reference>
<reference key="3">
    <citation type="journal article" date="2002" name="Nature">
        <title>Sequence and analysis of chromosome 2 of Dictyostelium discoideum.</title>
        <authorList>
            <person name="Gloeckner G."/>
            <person name="Eichinger L."/>
            <person name="Szafranski K."/>
            <person name="Pachebat J.A."/>
            <person name="Bankier A.T."/>
            <person name="Dear P.H."/>
            <person name="Lehmann R."/>
            <person name="Baumgart C."/>
            <person name="Parra G."/>
            <person name="Abril J.F."/>
            <person name="Guigo R."/>
            <person name="Kumpf K."/>
            <person name="Tunggal B."/>
            <person name="Cox E.C."/>
            <person name="Quail M.A."/>
            <person name="Platzer M."/>
            <person name="Rosenthal A."/>
            <person name="Noegel A.A."/>
        </authorList>
    </citation>
    <scope>NUCLEOTIDE SEQUENCE [LARGE SCALE GENOMIC DNA]</scope>
    <source>
        <strain>AX4</strain>
    </source>
</reference>
<reference key="4">
    <citation type="journal article" date="2005" name="Nature">
        <title>The genome of the social amoeba Dictyostelium discoideum.</title>
        <authorList>
            <person name="Eichinger L."/>
            <person name="Pachebat J.A."/>
            <person name="Gloeckner G."/>
            <person name="Rajandream M.A."/>
            <person name="Sucgang R."/>
            <person name="Berriman M."/>
            <person name="Song J."/>
            <person name="Olsen R."/>
            <person name="Szafranski K."/>
            <person name="Xu Q."/>
            <person name="Tunggal B."/>
            <person name="Kummerfeld S."/>
            <person name="Madera M."/>
            <person name="Konfortov B.A."/>
            <person name="Rivero F."/>
            <person name="Bankier A.T."/>
            <person name="Lehmann R."/>
            <person name="Hamlin N."/>
            <person name="Davies R."/>
            <person name="Gaudet P."/>
            <person name="Fey P."/>
            <person name="Pilcher K."/>
            <person name="Chen G."/>
            <person name="Saunders D."/>
            <person name="Sodergren E.J."/>
            <person name="Davis P."/>
            <person name="Kerhornou A."/>
            <person name="Nie X."/>
            <person name="Hall N."/>
            <person name="Anjard C."/>
            <person name="Hemphill L."/>
            <person name="Bason N."/>
            <person name="Farbrother P."/>
            <person name="Desany B."/>
            <person name="Just E."/>
            <person name="Morio T."/>
            <person name="Rost R."/>
            <person name="Churcher C.M."/>
            <person name="Cooper J."/>
            <person name="Haydock S."/>
            <person name="van Driessche N."/>
            <person name="Cronin A."/>
            <person name="Goodhead I."/>
            <person name="Muzny D.M."/>
            <person name="Mourier T."/>
            <person name="Pain A."/>
            <person name="Lu M."/>
            <person name="Harper D."/>
            <person name="Lindsay R."/>
            <person name="Hauser H."/>
            <person name="James K.D."/>
            <person name="Quiles M."/>
            <person name="Madan Babu M."/>
            <person name="Saito T."/>
            <person name="Buchrieser C."/>
            <person name="Wardroper A."/>
            <person name="Felder M."/>
            <person name="Thangavelu M."/>
            <person name="Johnson D."/>
            <person name="Knights A."/>
            <person name="Loulseged H."/>
            <person name="Mungall K.L."/>
            <person name="Oliver K."/>
            <person name="Price C."/>
            <person name="Quail M.A."/>
            <person name="Urushihara H."/>
            <person name="Hernandez J."/>
            <person name="Rabbinowitsch E."/>
            <person name="Steffen D."/>
            <person name="Sanders M."/>
            <person name="Ma J."/>
            <person name="Kohara Y."/>
            <person name="Sharp S."/>
            <person name="Simmonds M.N."/>
            <person name="Spiegler S."/>
            <person name="Tivey A."/>
            <person name="Sugano S."/>
            <person name="White B."/>
            <person name="Walker D."/>
            <person name="Woodward J.R."/>
            <person name="Winckler T."/>
            <person name="Tanaka Y."/>
            <person name="Shaulsky G."/>
            <person name="Schleicher M."/>
            <person name="Weinstock G.M."/>
            <person name="Rosenthal A."/>
            <person name="Cox E.C."/>
            <person name="Chisholm R.L."/>
            <person name="Gibbs R.A."/>
            <person name="Loomis W.F."/>
            <person name="Platzer M."/>
            <person name="Kay R.R."/>
            <person name="Williams J.G."/>
            <person name="Dear P.H."/>
            <person name="Noegel A.A."/>
            <person name="Barrell B.G."/>
            <person name="Kuspa A."/>
        </authorList>
    </citation>
    <scope>NUCLEOTIDE SEQUENCE [LARGE SCALE GENOMIC DNA]</scope>
    <source>
        <strain>AX4</strain>
    </source>
</reference>
<name>RS25_DICDI</name>
<proteinExistence type="inferred from homology"/>
<evidence type="ECO:0000256" key="1">
    <source>
        <dbReference type="SAM" id="MobiDB-lite"/>
    </source>
</evidence>
<evidence type="ECO:0000305" key="2"/>
<gene>
    <name type="primary">rps25</name>
    <name type="synonym">rpgF</name>
    <name type="ORF">DDB_G0271148</name>
</gene>
<accession>Q03409</accession>
<accession>Q55BF0</accession>
<feature type="chain" id="PRO_0000192879" description="Small ribosomal subunit protein eS25">
    <location>
        <begin position="1"/>
        <end position="110"/>
    </location>
</feature>
<feature type="region of interest" description="Disordered" evidence="1">
    <location>
        <begin position="1"/>
        <end position="39"/>
    </location>
</feature>
<comment type="similarity">
    <text evidence="2">Belongs to the eukaryotic ribosomal protein eS25 family.</text>
</comment>
<protein>
    <recommendedName>
        <fullName evidence="2">Small ribosomal subunit protein eS25</fullName>
    </recommendedName>
    <alternativeName>
        <fullName>40S ribosomal protein S25</fullName>
    </alternativeName>
    <alternativeName>
        <fullName>S31</fullName>
    </alternativeName>
</protein>
<sequence>MPPKAAGGKSKQIQASKAAAKGSSGGAGRKKWSKGRSREKLNNAILFDKETYAKLLKEMPTAKVITTAVVSERMKCNGSLARRAIKELLSKGLIKQIIKGHGNGVYTKAQ</sequence>
<organism>
    <name type="scientific">Dictyostelium discoideum</name>
    <name type="common">Social amoeba</name>
    <dbReference type="NCBI Taxonomy" id="44689"/>
    <lineage>
        <taxon>Eukaryota</taxon>
        <taxon>Amoebozoa</taxon>
        <taxon>Evosea</taxon>
        <taxon>Eumycetozoa</taxon>
        <taxon>Dictyostelia</taxon>
        <taxon>Dictyosteliales</taxon>
        <taxon>Dictyosteliaceae</taxon>
        <taxon>Dictyostelium</taxon>
    </lineage>
</organism>